<accession>B1JMP1</accession>
<evidence type="ECO:0000255" key="1">
    <source>
        <dbReference type="HAMAP-Rule" id="MF_00149"/>
    </source>
</evidence>
<evidence type="ECO:0000256" key="2">
    <source>
        <dbReference type="SAM" id="MobiDB-lite"/>
    </source>
</evidence>
<feature type="chain" id="PRO_1000096706" description="DNA mismatch repair protein MutL">
    <location>
        <begin position="1"/>
        <end position="635"/>
    </location>
</feature>
<feature type="region of interest" description="Disordered" evidence="2">
    <location>
        <begin position="359"/>
        <end position="399"/>
    </location>
</feature>
<feature type="compositionally biased region" description="Low complexity" evidence="2">
    <location>
        <begin position="364"/>
        <end position="377"/>
    </location>
</feature>
<feature type="compositionally biased region" description="Basic and acidic residues" evidence="2">
    <location>
        <begin position="378"/>
        <end position="399"/>
    </location>
</feature>
<comment type="function">
    <text evidence="1">This protein is involved in the repair of mismatches in DNA. It is required for dam-dependent methyl-directed DNA mismatch repair. May act as a 'molecular matchmaker', a protein that promotes the formation of a stable complex between two or more DNA-binding proteins in an ATP-dependent manner without itself being part of a final effector complex.</text>
</comment>
<comment type="similarity">
    <text evidence="1">Belongs to the DNA mismatch repair MutL/HexB family.</text>
</comment>
<organism>
    <name type="scientific">Yersinia pseudotuberculosis serotype O:3 (strain YPIII)</name>
    <dbReference type="NCBI Taxonomy" id="502800"/>
    <lineage>
        <taxon>Bacteria</taxon>
        <taxon>Pseudomonadati</taxon>
        <taxon>Pseudomonadota</taxon>
        <taxon>Gammaproteobacteria</taxon>
        <taxon>Enterobacterales</taxon>
        <taxon>Yersiniaceae</taxon>
        <taxon>Yersinia</taxon>
    </lineage>
</organism>
<dbReference type="EMBL" id="CP000950">
    <property type="protein sequence ID" value="ACA70068.1"/>
    <property type="molecule type" value="Genomic_DNA"/>
</dbReference>
<dbReference type="RefSeq" id="WP_002209148.1">
    <property type="nucleotide sequence ID" value="NZ_CP009792.1"/>
</dbReference>
<dbReference type="SMR" id="B1JMP1"/>
<dbReference type="GeneID" id="57974236"/>
<dbReference type="KEGG" id="ypy:YPK_3801"/>
<dbReference type="PATRIC" id="fig|502800.11.peg.149"/>
<dbReference type="GO" id="GO:0032300">
    <property type="term" value="C:mismatch repair complex"/>
    <property type="evidence" value="ECO:0007669"/>
    <property type="project" value="InterPro"/>
</dbReference>
<dbReference type="GO" id="GO:0005524">
    <property type="term" value="F:ATP binding"/>
    <property type="evidence" value="ECO:0007669"/>
    <property type="project" value="InterPro"/>
</dbReference>
<dbReference type="GO" id="GO:0016887">
    <property type="term" value="F:ATP hydrolysis activity"/>
    <property type="evidence" value="ECO:0007669"/>
    <property type="project" value="InterPro"/>
</dbReference>
<dbReference type="GO" id="GO:0140664">
    <property type="term" value="F:ATP-dependent DNA damage sensor activity"/>
    <property type="evidence" value="ECO:0007669"/>
    <property type="project" value="InterPro"/>
</dbReference>
<dbReference type="GO" id="GO:0030983">
    <property type="term" value="F:mismatched DNA binding"/>
    <property type="evidence" value="ECO:0007669"/>
    <property type="project" value="InterPro"/>
</dbReference>
<dbReference type="GO" id="GO:0006298">
    <property type="term" value="P:mismatch repair"/>
    <property type="evidence" value="ECO:0007669"/>
    <property type="project" value="UniProtKB-UniRule"/>
</dbReference>
<dbReference type="CDD" id="cd16926">
    <property type="entry name" value="HATPase_MutL-MLH-PMS-like"/>
    <property type="match status" value="1"/>
</dbReference>
<dbReference type="CDD" id="cd03482">
    <property type="entry name" value="MutL_Trans_MutL"/>
    <property type="match status" value="1"/>
</dbReference>
<dbReference type="FunFam" id="3.30.230.10:FF:000013">
    <property type="entry name" value="DNA mismatch repair endonuclease MutL"/>
    <property type="match status" value="1"/>
</dbReference>
<dbReference type="FunFam" id="3.30.565.10:FF:000003">
    <property type="entry name" value="DNA mismatch repair endonuclease MutL"/>
    <property type="match status" value="1"/>
</dbReference>
<dbReference type="FunFam" id="3.30.1370.100:FF:000002">
    <property type="entry name" value="DNA mismatch repair protein MutL"/>
    <property type="match status" value="1"/>
</dbReference>
<dbReference type="Gene3D" id="3.30.230.10">
    <property type="match status" value="1"/>
</dbReference>
<dbReference type="Gene3D" id="3.30.565.10">
    <property type="entry name" value="Histidine kinase-like ATPase, C-terminal domain"/>
    <property type="match status" value="1"/>
</dbReference>
<dbReference type="Gene3D" id="3.30.1540.20">
    <property type="entry name" value="MutL, C-terminal domain, dimerisation subdomain"/>
    <property type="match status" value="1"/>
</dbReference>
<dbReference type="Gene3D" id="3.30.1370.100">
    <property type="entry name" value="MutL, C-terminal domain, regulatory subdomain"/>
    <property type="match status" value="1"/>
</dbReference>
<dbReference type="HAMAP" id="MF_00149">
    <property type="entry name" value="DNA_mis_repair"/>
    <property type="match status" value="1"/>
</dbReference>
<dbReference type="InterPro" id="IPR014762">
    <property type="entry name" value="DNA_mismatch_repair_CS"/>
</dbReference>
<dbReference type="InterPro" id="IPR020667">
    <property type="entry name" value="DNA_mismatch_repair_MutL"/>
</dbReference>
<dbReference type="InterPro" id="IPR013507">
    <property type="entry name" value="DNA_mismatch_S5_2-like"/>
</dbReference>
<dbReference type="InterPro" id="IPR036890">
    <property type="entry name" value="HATPase_C_sf"/>
</dbReference>
<dbReference type="InterPro" id="IPR002099">
    <property type="entry name" value="MutL/Mlh/PMS"/>
</dbReference>
<dbReference type="InterPro" id="IPR038973">
    <property type="entry name" value="MutL/Mlh/Pms-like"/>
</dbReference>
<dbReference type="InterPro" id="IPR014790">
    <property type="entry name" value="MutL_C"/>
</dbReference>
<dbReference type="InterPro" id="IPR042120">
    <property type="entry name" value="MutL_C_dimsub"/>
</dbReference>
<dbReference type="InterPro" id="IPR042121">
    <property type="entry name" value="MutL_C_regsub"/>
</dbReference>
<dbReference type="InterPro" id="IPR037198">
    <property type="entry name" value="MutL_C_sf"/>
</dbReference>
<dbReference type="InterPro" id="IPR020568">
    <property type="entry name" value="Ribosomal_Su5_D2-typ_SF"/>
</dbReference>
<dbReference type="InterPro" id="IPR014721">
    <property type="entry name" value="Ribsml_uS5_D2-typ_fold_subgr"/>
</dbReference>
<dbReference type="NCBIfam" id="TIGR00585">
    <property type="entry name" value="mutl"/>
    <property type="match status" value="1"/>
</dbReference>
<dbReference type="NCBIfam" id="NF000948">
    <property type="entry name" value="PRK00095.1-1"/>
    <property type="match status" value="1"/>
</dbReference>
<dbReference type="PANTHER" id="PTHR10073">
    <property type="entry name" value="DNA MISMATCH REPAIR PROTEIN MLH, PMS, MUTL"/>
    <property type="match status" value="1"/>
</dbReference>
<dbReference type="PANTHER" id="PTHR10073:SF12">
    <property type="entry name" value="DNA MISMATCH REPAIR PROTEIN MLH1"/>
    <property type="match status" value="1"/>
</dbReference>
<dbReference type="Pfam" id="PF01119">
    <property type="entry name" value="DNA_mis_repair"/>
    <property type="match status" value="1"/>
</dbReference>
<dbReference type="Pfam" id="PF13589">
    <property type="entry name" value="HATPase_c_3"/>
    <property type="match status" value="1"/>
</dbReference>
<dbReference type="Pfam" id="PF08676">
    <property type="entry name" value="MutL_C"/>
    <property type="match status" value="1"/>
</dbReference>
<dbReference type="SMART" id="SM01340">
    <property type="entry name" value="DNA_mis_repair"/>
    <property type="match status" value="1"/>
</dbReference>
<dbReference type="SMART" id="SM00853">
    <property type="entry name" value="MutL_C"/>
    <property type="match status" value="1"/>
</dbReference>
<dbReference type="SUPFAM" id="SSF55874">
    <property type="entry name" value="ATPase domain of HSP90 chaperone/DNA topoisomerase II/histidine kinase"/>
    <property type="match status" value="1"/>
</dbReference>
<dbReference type="SUPFAM" id="SSF118116">
    <property type="entry name" value="DNA mismatch repair protein MutL"/>
    <property type="match status" value="1"/>
</dbReference>
<dbReference type="SUPFAM" id="SSF54211">
    <property type="entry name" value="Ribosomal protein S5 domain 2-like"/>
    <property type="match status" value="1"/>
</dbReference>
<dbReference type="PROSITE" id="PS00058">
    <property type="entry name" value="DNA_MISMATCH_REPAIR_1"/>
    <property type="match status" value="1"/>
</dbReference>
<protein>
    <recommendedName>
        <fullName evidence="1">DNA mismatch repair protein MutL</fullName>
    </recommendedName>
</protein>
<reference key="1">
    <citation type="submission" date="2008-02" db="EMBL/GenBank/DDBJ databases">
        <title>Complete sequence of Yersinia pseudotuberculosis YPIII.</title>
        <authorList>
            <consortium name="US DOE Joint Genome Institute"/>
            <person name="Copeland A."/>
            <person name="Lucas S."/>
            <person name="Lapidus A."/>
            <person name="Glavina del Rio T."/>
            <person name="Dalin E."/>
            <person name="Tice H."/>
            <person name="Bruce D."/>
            <person name="Goodwin L."/>
            <person name="Pitluck S."/>
            <person name="Munk A.C."/>
            <person name="Brettin T."/>
            <person name="Detter J.C."/>
            <person name="Han C."/>
            <person name="Tapia R."/>
            <person name="Schmutz J."/>
            <person name="Larimer F."/>
            <person name="Land M."/>
            <person name="Hauser L."/>
            <person name="Challacombe J.F."/>
            <person name="Green L."/>
            <person name="Lindler L.E."/>
            <person name="Nikolich M.P."/>
            <person name="Richardson P."/>
        </authorList>
    </citation>
    <scope>NUCLEOTIDE SEQUENCE [LARGE SCALE GENOMIC DNA]</scope>
    <source>
        <strain>YPIII</strain>
    </source>
</reference>
<proteinExistence type="inferred from homology"/>
<gene>
    <name evidence="1" type="primary">mutL</name>
    <name type="ordered locus">YPK_3801</name>
</gene>
<sequence length="635" mass="70288">MPIQILPPQLANQIAAGEVVERPASVVKELVENSLDAGATRIDIDIERGGAKLIRIRDNGCGISKDDLALALARHATSKISSLEDLEAILSMGFRGEALASISSVSRLILTSRTAEQSEAWQAYAEGRDMAVTIKPAAHPVGSTLEVLDLFYNTPARRKFMRTEKTEFGHIDEVVRRIALARFDVAINLNHNGKLIRQYRAAPDPAQHERRLASICGPAFLQHALAIAWQHGDLNIHGWVADPAASHTLSEMQYCYVNNRMMRDRLINHAIRQAYQDRLNDAQQPAYVLYLDIDPHQVDVNVHPAKHEVRFHQARLVHDFIYQAVTAVLQQTNAPILNISEEGEVDAPRWQQENRVAAGTNKYAQPEAAKSSAAEQAVARERSSARERAAPAYKEDHPYQKQQGELYRQLLQPSAAAKPATSPAAIPASSVSSPSIPVQRITQAEEPLHGDNYSFGRVLTVFPPCYALIEYQGGVALLSLAVAERWLKQAQLSPPEEGLRPQPLLIPLKITLDKNEIAACQNHEKLLITMGIELSVEQGRATLRAVSLPLRQQNLQKLIPELLGYLSQHEEISPDTLATWLARHLGSEHEVWNVSQAIQLLTEVERLCPQLVQSPPAGLLQPIDIKAALATLTHE</sequence>
<keyword id="KW-0227">DNA damage</keyword>
<keyword id="KW-0234">DNA repair</keyword>
<name>MUTL_YERPY</name>